<comment type="function">
    <text evidence="1">Binds the lower part of the 30S subunit head. Binds mRNA in the 70S ribosome, positioning it for translation.</text>
</comment>
<comment type="subunit">
    <text evidence="1">Part of the 30S ribosomal subunit. Forms a tight complex with proteins S10 and S14.</text>
</comment>
<comment type="similarity">
    <text evidence="1">Belongs to the universal ribosomal protein uS3 family.</text>
</comment>
<name>RS3_NITOC</name>
<feature type="chain" id="PRO_0000230708" description="Small ribosomal subunit protein uS3">
    <location>
        <begin position="1"/>
        <end position="223"/>
    </location>
</feature>
<feature type="domain" description="KH type-2" evidence="1">
    <location>
        <begin position="39"/>
        <end position="107"/>
    </location>
</feature>
<evidence type="ECO:0000255" key="1">
    <source>
        <dbReference type="HAMAP-Rule" id="MF_01309"/>
    </source>
</evidence>
<evidence type="ECO:0000305" key="2"/>
<organism>
    <name type="scientific">Nitrosococcus oceani (strain ATCC 19707 / BCRC 17464 / JCM 30415 / NCIMB 11848 / C-107)</name>
    <dbReference type="NCBI Taxonomy" id="323261"/>
    <lineage>
        <taxon>Bacteria</taxon>
        <taxon>Pseudomonadati</taxon>
        <taxon>Pseudomonadota</taxon>
        <taxon>Gammaproteobacteria</taxon>
        <taxon>Chromatiales</taxon>
        <taxon>Chromatiaceae</taxon>
        <taxon>Nitrosococcus</taxon>
    </lineage>
</organism>
<sequence>MGQKVHPTGIRLGIVKDWNSKWYADSGQFSELLNNDLAVRSYLAKKLSHALVSNIQIDRPARNARITIHTARPGIVIGKKGEDINNLRQEVSRMMGIPVHINIQEIRKPELDATLVAANVAQQLERRIMFRRAMKRAVTNAMRVGAQGIRIKVSGRLNGAEIARNEWYREGRVPLHTLRADIDYGFAEAKTTYGILGVKVWIFKGEVFEQPEPQVAAGSSAIS</sequence>
<keyword id="KW-1185">Reference proteome</keyword>
<keyword id="KW-0687">Ribonucleoprotein</keyword>
<keyword id="KW-0689">Ribosomal protein</keyword>
<keyword id="KW-0694">RNA-binding</keyword>
<keyword id="KW-0699">rRNA-binding</keyword>
<proteinExistence type="inferred from homology"/>
<accession>Q3J8S0</accession>
<dbReference type="EMBL" id="CP000127">
    <property type="protein sequence ID" value="ABA58776.1"/>
    <property type="molecule type" value="Genomic_DNA"/>
</dbReference>
<dbReference type="RefSeq" id="WP_002809718.1">
    <property type="nucleotide sequence ID" value="NC_007484.1"/>
</dbReference>
<dbReference type="SMR" id="Q3J8S0"/>
<dbReference type="FunCoup" id="Q3J8S0">
    <property type="interactions" value="721"/>
</dbReference>
<dbReference type="STRING" id="323261.Noc_2318"/>
<dbReference type="KEGG" id="noc:Noc_2318"/>
<dbReference type="eggNOG" id="COG0092">
    <property type="taxonomic scope" value="Bacteria"/>
</dbReference>
<dbReference type="HOGENOM" id="CLU_058591_0_2_6"/>
<dbReference type="InParanoid" id="Q3J8S0"/>
<dbReference type="Proteomes" id="UP000006838">
    <property type="component" value="Chromosome"/>
</dbReference>
<dbReference type="GO" id="GO:0022627">
    <property type="term" value="C:cytosolic small ribosomal subunit"/>
    <property type="evidence" value="ECO:0007669"/>
    <property type="project" value="TreeGrafter"/>
</dbReference>
<dbReference type="GO" id="GO:0003729">
    <property type="term" value="F:mRNA binding"/>
    <property type="evidence" value="ECO:0007669"/>
    <property type="project" value="UniProtKB-UniRule"/>
</dbReference>
<dbReference type="GO" id="GO:0019843">
    <property type="term" value="F:rRNA binding"/>
    <property type="evidence" value="ECO:0007669"/>
    <property type="project" value="UniProtKB-UniRule"/>
</dbReference>
<dbReference type="GO" id="GO:0003735">
    <property type="term" value="F:structural constituent of ribosome"/>
    <property type="evidence" value="ECO:0007669"/>
    <property type="project" value="InterPro"/>
</dbReference>
<dbReference type="GO" id="GO:0006412">
    <property type="term" value="P:translation"/>
    <property type="evidence" value="ECO:0007669"/>
    <property type="project" value="UniProtKB-UniRule"/>
</dbReference>
<dbReference type="CDD" id="cd02412">
    <property type="entry name" value="KH-II_30S_S3"/>
    <property type="match status" value="1"/>
</dbReference>
<dbReference type="FunFam" id="3.30.1140.32:FF:000001">
    <property type="entry name" value="30S ribosomal protein S3"/>
    <property type="match status" value="1"/>
</dbReference>
<dbReference type="FunFam" id="3.30.300.20:FF:000001">
    <property type="entry name" value="30S ribosomal protein S3"/>
    <property type="match status" value="1"/>
</dbReference>
<dbReference type="Gene3D" id="3.30.300.20">
    <property type="match status" value="1"/>
</dbReference>
<dbReference type="Gene3D" id="3.30.1140.32">
    <property type="entry name" value="Ribosomal protein S3, C-terminal domain"/>
    <property type="match status" value="1"/>
</dbReference>
<dbReference type="HAMAP" id="MF_01309_B">
    <property type="entry name" value="Ribosomal_uS3_B"/>
    <property type="match status" value="1"/>
</dbReference>
<dbReference type="InterPro" id="IPR004087">
    <property type="entry name" value="KH_dom"/>
</dbReference>
<dbReference type="InterPro" id="IPR015946">
    <property type="entry name" value="KH_dom-like_a/b"/>
</dbReference>
<dbReference type="InterPro" id="IPR004044">
    <property type="entry name" value="KH_dom_type_2"/>
</dbReference>
<dbReference type="InterPro" id="IPR009019">
    <property type="entry name" value="KH_sf_prok-type"/>
</dbReference>
<dbReference type="InterPro" id="IPR036419">
    <property type="entry name" value="Ribosomal_S3_C_sf"/>
</dbReference>
<dbReference type="InterPro" id="IPR005704">
    <property type="entry name" value="Ribosomal_uS3_bac-typ"/>
</dbReference>
<dbReference type="InterPro" id="IPR001351">
    <property type="entry name" value="Ribosomal_uS3_C"/>
</dbReference>
<dbReference type="InterPro" id="IPR018280">
    <property type="entry name" value="Ribosomal_uS3_CS"/>
</dbReference>
<dbReference type="NCBIfam" id="TIGR01009">
    <property type="entry name" value="rpsC_bact"/>
    <property type="match status" value="1"/>
</dbReference>
<dbReference type="PANTHER" id="PTHR11760">
    <property type="entry name" value="30S/40S RIBOSOMAL PROTEIN S3"/>
    <property type="match status" value="1"/>
</dbReference>
<dbReference type="PANTHER" id="PTHR11760:SF19">
    <property type="entry name" value="SMALL RIBOSOMAL SUBUNIT PROTEIN US3C"/>
    <property type="match status" value="1"/>
</dbReference>
<dbReference type="Pfam" id="PF07650">
    <property type="entry name" value="KH_2"/>
    <property type="match status" value="1"/>
</dbReference>
<dbReference type="Pfam" id="PF00189">
    <property type="entry name" value="Ribosomal_S3_C"/>
    <property type="match status" value="1"/>
</dbReference>
<dbReference type="SMART" id="SM00322">
    <property type="entry name" value="KH"/>
    <property type="match status" value="1"/>
</dbReference>
<dbReference type="SUPFAM" id="SSF54814">
    <property type="entry name" value="Prokaryotic type KH domain (KH-domain type II)"/>
    <property type="match status" value="1"/>
</dbReference>
<dbReference type="SUPFAM" id="SSF54821">
    <property type="entry name" value="Ribosomal protein S3 C-terminal domain"/>
    <property type="match status" value="1"/>
</dbReference>
<dbReference type="PROSITE" id="PS50823">
    <property type="entry name" value="KH_TYPE_2"/>
    <property type="match status" value="1"/>
</dbReference>
<dbReference type="PROSITE" id="PS00548">
    <property type="entry name" value="RIBOSOMAL_S3"/>
    <property type="match status" value="1"/>
</dbReference>
<reference key="1">
    <citation type="journal article" date="2006" name="Appl. Environ. Microbiol.">
        <title>Complete genome sequence of the marine, chemolithoautotrophic, ammonia-oxidizing bacterium Nitrosococcus oceani ATCC 19707.</title>
        <authorList>
            <person name="Klotz M.G."/>
            <person name="Arp D.J."/>
            <person name="Chain P.S.G."/>
            <person name="El-Sheikh A.F."/>
            <person name="Hauser L.J."/>
            <person name="Hommes N.G."/>
            <person name="Larimer F.W."/>
            <person name="Malfatti S.A."/>
            <person name="Norton J.M."/>
            <person name="Poret-Peterson A.T."/>
            <person name="Vergez L.M."/>
            <person name="Ward B.B."/>
        </authorList>
    </citation>
    <scope>NUCLEOTIDE SEQUENCE [LARGE SCALE GENOMIC DNA]</scope>
    <source>
        <strain>ATCC 19707 / BCRC 17464 / JCM 30415 / NCIMB 11848 / C-107</strain>
    </source>
</reference>
<protein>
    <recommendedName>
        <fullName evidence="1">Small ribosomal subunit protein uS3</fullName>
    </recommendedName>
    <alternativeName>
        <fullName evidence="2">30S ribosomal protein S3</fullName>
    </alternativeName>
</protein>
<gene>
    <name evidence="1" type="primary">rpsC</name>
    <name type="ordered locus">Noc_2318</name>
</gene>